<protein>
    <recommendedName>
        <fullName>M-zodatoxin-Lt8e</fullName>
        <shortName>M-ZDTX-Lt8e</shortName>
    </recommendedName>
    <alternativeName>
        <fullName evidence="5">Cytoinsectotoxin-1e</fullName>
        <shortName evidence="5">CIT-1e</shortName>
    </alternativeName>
</protein>
<proteinExistence type="evidence at protein level"/>
<keyword id="KW-0044">Antibiotic</keyword>
<keyword id="KW-0929">Antimicrobial</keyword>
<keyword id="KW-0204">Cytolysis</keyword>
<keyword id="KW-0903">Direct protein sequencing</keyword>
<keyword id="KW-0354">Hemolysis</keyword>
<keyword id="KW-0964">Secreted</keyword>
<keyword id="KW-0732">Signal</keyword>
<keyword id="KW-0800">Toxin</keyword>
<feature type="signal peptide" evidence="2">
    <location>
        <begin position="1"/>
        <end position="20"/>
    </location>
</feature>
<feature type="propeptide" id="PRO_0000366078" evidence="3">
    <location>
        <begin position="21"/>
        <end position="60"/>
    </location>
</feature>
<feature type="chain" id="PRO_0000337162" description="M-zodatoxin-Lt8e">
    <location>
        <begin position="61"/>
        <end position="129"/>
    </location>
</feature>
<feature type="short sequence motif" description="Processing quadruplet motif" evidence="6">
    <location>
        <begin position="57"/>
        <end position="60"/>
    </location>
</feature>
<dbReference type="EMBL" id="FM165478">
    <property type="protein sequence ID" value="CAQ63554.1"/>
    <property type="molecule type" value="mRNA"/>
</dbReference>
<dbReference type="SMR" id="P85257"/>
<dbReference type="ArachnoServer" id="AS000660">
    <property type="toxin name" value="M-zodatoxin-Lt8e"/>
</dbReference>
<dbReference type="GO" id="GO:0005576">
    <property type="term" value="C:extracellular region"/>
    <property type="evidence" value="ECO:0000250"/>
    <property type="project" value="UniProtKB"/>
</dbReference>
<dbReference type="GO" id="GO:0090729">
    <property type="term" value="F:toxin activity"/>
    <property type="evidence" value="ECO:0007669"/>
    <property type="project" value="UniProtKB-KW"/>
</dbReference>
<dbReference type="GO" id="GO:0050829">
    <property type="term" value="P:defense response to Gram-negative bacterium"/>
    <property type="evidence" value="ECO:0000250"/>
    <property type="project" value="UniProtKB"/>
</dbReference>
<dbReference type="GO" id="GO:0050830">
    <property type="term" value="P:defense response to Gram-positive bacterium"/>
    <property type="evidence" value="ECO:0000250"/>
    <property type="project" value="UniProtKB"/>
</dbReference>
<dbReference type="GO" id="GO:0031640">
    <property type="term" value="P:killing of cells of another organism"/>
    <property type="evidence" value="ECO:0007669"/>
    <property type="project" value="UniProtKB-KW"/>
</dbReference>
<dbReference type="InterPro" id="IPR018802">
    <property type="entry name" value="Latarcin_precursor"/>
</dbReference>
<dbReference type="Pfam" id="PF10279">
    <property type="entry name" value="Latarcin"/>
    <property type="match status" value="1"/>
</dbReference>
<sequence>MKYFVVALALVAAFVCIAESKPAESEHELAEVEEENELADLEDAVWLEHLADLSDLEEARGFFGNTWKKIKGKSDKIMLKKAVKIMVKKEGISKEEAQAKVDAMSKKQIRLYLLKYYGKKALQKASEKL</sequence>
<reference evidence="7" key="1">
    <citation type="journal article" date="2008" name="Biochem. J.">
        <title>Cyto-insectotoxins, a novel class of cytolytic and insecticidal peptides from spider venom.</title>
        <authorList>
            <person name="Vassilevski A.A."/>
            <person name="Kozlov S.A."/>
            <person name="Samsonova O.V."/>
            <person name="Egorova N.S."/>
            <person name="Karpunin D.V."/>
            <person name="Pluzhnikov K.A."/>
            <person name="Feofanov A.V."/>
            <person name="Grishin E.V."/>
        </authorList>
    </citation>
    <scope>NUCLEOTIDE SEQUENCE [MRNA]</scope>
    <scope>PROTEIN SEQUENCE OF 61-129</scope>
    <scope>SUBCELLULAR LOCATION</scope>
    <scope>TISSUE SPECIFICITY</scope>
    <source>
        <tissue evidence="3">Venom</tissue>
        <tissue>Venom gland</tissue>
    </source>
</reference>
<reference key="2">
    <citation type="journal article" date="2016" name="Biochem. J.">
        <title>Lachesana tarabaevi, an expert in membrane-active toxins.</title>
        <authorList>
            <person name="Kuzmenkov A.I."/>
            <person name="Sachkova M.Y."/>
            <person name="Kovalchuk S.I."/>
            <person name="Grishin E.V."/>
            <person name="Vassilevski A.A."/>
        </authorList>
    </citation>
    <scope>SUBCELLULAR LOCATION</scope>
    <scope>PQM MOTIF</scope>
    <scope>MASS SPECTROMETRY</scope>
    <source>
        <tissue evidence="6">Venom</tissue>
    </source>
</reference>
<accession>P85257</accession>
<accession>B3W6I3</accession>
<comment type="function">
    <text evidence="1">Insecticidal, cytolytic and antimicrobial peptide. Forms voltage-dependent, ion-permeable channels in membranes. At high concentration causes cell membrane lysis (By similarity).</text>
</comment>
<comment type="subcellular location">
    <subcellularLocation>
        <location evidence="3 4">Secreted</location>
    </subcellularLocation>
</comment>
<comment type="tissue specificity">
    <text evidence="3">Expressed by the venom gland.</text>
</comment>
<comment type="domain">
    <text evidence="1">Both the N-terminus (61-94) and the C-terminus (99-129) of the mature peptide form alpha-helices which probably disrupt target cell membranes. The linker region (95-98) probably derives from a processing quadruplet motif (PQM), found in propeptides of many zodatoxins, hinting at a fusion of two originally separate membrane-active peptides.</text>
</comment>
<comment type="PTM">
    <text evidence="6">Cleavage of the propeptide depends on the processing quadruplet motif (XXXR, with at least one of X being E).</text>
</comment>
<comment type="mass spectrometry"/>
<comment type="similarity">
    <text evidence="7">Belongs to the cationic peptide 06 (cytoinsectotoxin) family.</text>
</comment>
<evidence type="ECO:0000250" key="1">
    <source>
        <dbReference type="UniProtKB" id="P85253"/>
    </source>
</evidence>
<evidence type="ECO:0000255" key="2"/>
<evidence type="ECO:0000269" key="3">
    <source>
    </source>
</evidence>
<evidence type="ECO:0000269" key="4">
    <source>
    </source>
</evidence>
<evidence type="ECO:0000303" key="5">
    <source>
    </source>
</evidence>
<evidence type="ECO:0000303" key="6">
    <source>
    </source>
</evidence>
<evidence type="ECO:0000305" key="7"/>
<gene>
    <name type="primary">cit 1-5</name>
</gene>
<organism>
    <name type="scientific">Lachesana tarabaevi</name>
    <name type="common">Spider</name>
    <dbReference type="NCBI Taxonomy" id="379576"/>
    <lineage>
        <taxon>Eukaryota</taxon>
        <taxon>Metazoa</taxon>
        <taxon>Ecdysozoa</taxon>
        <taxon>Arthropoda</taxon>
        <taxon>Chelicerata</taxon>
        <taxon>Arachnida</taxon>
        <taxon>Araneae</taxon>
        <taxon>Araneomorphae</taxon>
        <taxon>Entelegynae</taxon>
        <taxon>Entelegynae incertae sedis</taxon>
        <taxon>Zodariidae</taxon>
        <taxon>Lachesana</taxon>
    </lineage>
</organism>
<name>CTX15_LACTA</name>